<reference key="1">
    <citation type="journal article" date="2007" name="Genes Dev.">
        <title>New insights into Acinetobacter baumannii pathogenesis revealed by high-density pyrosequencing and transposon mutagenesis.</title>
        <authorList>
            <person name="Smith M.G."/>
            <person name="Gianoulis T.A."/>
            <person name="Pukatzki S."/>
            <person name="Mekalanos J.J."/>
            <person name="Ornston L.N."/>
            <person name="Gerstein M."/>
            <person name="Snyder M."/>
        </authorList>
    </citation>
    <scope>NUCLEOTIDE SEQUENCE [LARGE SCALE GENOMIC DNA]</scope>
    <source>
        <strain>ATCC 17978 / DSM 105126 / CIP 53.77 / LMG 1025 / NCDC KC755 / 5377</strain>
    </source>
</reference>
<sequence>MKKLMMIGFGAMAAEVYAHLPQDLQLKWIVVPSRSIEKVQSQVSSDIQVISDIEQCDGTPDYVIEVAGQAAVKEHAQKVLAKGWTIGLISVGTLADSEFLVQLKQTAEKNDAHLHLLAGAIAGIDGISAAKEGGLQKVTYKGCKSPKSWKGSYAEQLVDLDHVSEPTVFFTGTAREAAMKFPANANVAATIALAGLGMDETMVELTVDPTINKNKHTIVAEGGFGQMTIELVGVPLPSNPKTSTLAALSVIRACRNSVEAIQI</sequence>
<name>ASPD_ACIBT</name>
<proteinExistence type="inferred from homology"/>
<protein>
    <recommendedName>
        <fullName evidence="1">L-aspartate dehydrogenase</fullName>
        <ecNumber evidence="1">1.4.1.21</ecNumber>
    </recommendedName>
</protein>
<dbReference type="EC" id="1.4.1.21" evidence="1"/>
<dbReference type="EMBL" id="CP000521">
    <property type="protein sequence ID" value="ABO11388.2"/>
    <property type="molecule type" value="Genomic_DNA"/>
</dbReference>
<dbReference type="RefSeq" id="WP_000735778.1">
    <property type="nucleotide sequence ID" value="NZ_CP053098.1"/>
</dbReference>
<dbReference type="SMR" id="A3M394"/>
<dbReference type="KEGG" id="acb:A1S_0956"/>
<dbReference type="HOGENOM" id="CLU_089550_0_0_6"/>
<dbReference type="UniPathway" id="UPA00253">
    <property type="reaction ID" value="UER00456"/>
</dbReference>
<dbReference type="GO" id="GO:0033735">
    <property type="term" value="F:aspartate dehydrogenase activity"/>
    <property type="evidence" value="ECO:0007669"/>
    <property type="project" value="UniProtKB-EC"/>
</dbReference>
<dbReference type="GO" id="GO:0051287">
    <property type="term" value="F:NAD binding"/>
    <property type="evidence" value="ECO:0007669"/>
    <property type="project" value="UniProtKB-UniRule"/>
</dbReference>
<dbReference type="GO" id="GO:0050661">
    <property type="term" value="F:NADP binding"/>
    <property type="evidence" value="ECO:0007669"/>
    <property type="project" value="UniProtKB-UniRule"/>
</dbReference>
<dbReference type="GO" id="GO:0016639">
    <property type="term" value="F:oxidoreductase activity, acting on the CH-NH2 group of donors, NAD or NADP as acceptor"/>
    <property type="evidence" value="ECO:0007669"/>
    <property type="project" value="UniProtKB-UniRule"/>
</dbReference>
<dbReference type="GO" id="GO:0009435">
    <property type="term" value="P:NAD biosynthetic process"/>
    <property type="evidence" value="ECO:0007669"/>
    <property type="project" value="UniProtKB-UniRule"/>
</dbReference>
<dbReference type="Gene3D" id="3.30.360.10">
    <property type="entry name" value="Dihydrodipicolinate Reductase, domain 2"/>
    <property type="match status" value="1"/>
</dbReference>
<dbReference type="Gene3D" id="3.40.50.720">
    <property type="entry name" value="NAD(P)-binding Rossmann-like Domain"/>
    <property type="match status" value="1"/>
</dbReference>
<dbReference type="HAMAP" id="MF_01265">
    <property type="entry name" value="NadX"/>
    <property type="match status" value="1"/>
</dbReference>
<dbReference type="InterPro" id="IPR005106">
    <property type="entry name" value="Asp/hSer_DH_NAD-bd"/>
</dbReference>
<dbReference type="InterPro" id="IPR002811">
    <property type="entry name" value="Asp_DH"/>
</dbReference>
<dbReference type="InterPro" id="IPR020626">
    <property type="entry name" value="Asp_DH_prok"/>
</dbReference>
<dbReference type="InterPro" id="IPR011182">
    <property type="entry name" value="L-Asp_DH"/>
</dbReference>
<dbReference type="InterPro" id="IPR036291">
    <property type="entry name" value="NAD(P)-bd_dom_sf"/>
</dbReference>
<dbReference type="NCBIfam" id="NF009827">
    <property type="entry name" value="PRK13303.1-2"/>
    <property type="match status" value="1"/>
</dbReference>
<dbReference type="NCBIfam" id="NF009828">
    <property type="entry name" value="PRK13303.1-3"/>
    <property type="match status" value="1"/>
</dbReference>
<dbReference type="PANTHER" id="PTHR31873:SF6">
    <property type="entry name" value="ASPARTATE DEHYDROGENASE DOMAIN-CONTAINING PROTEIN"/>
    <property type="match status" value="1"/>
</dbReference>
<dbReference type="PANTHER" id="PTHR31873">
    <property type="entry name" value="L-ASPARTATE DEHYDROGENASE-RELATED"/>
    <property type="match status" value="1"/>
</dbReference>
<dbReference type="Pfam" id="PF01958">
    <property type="entry name" value="Asp_DH_C"/>
    <property type="match status" value="1"/>
</dbReference>
<dbReference type="Pfam" id="PF03447">
    <property type="entry name" value="NAD_binding_3"/>
    <property type="match status" value="1"/>
</dbReference>
<dbReference type="PIRSF" id="PIRSF005227">
    <property type="entry name" value="Asp_dh_NAD_syn"/>
    <property type="match status" value="1"/>
</dbReference>
<dbReference type="SUPFAM" id="SSF55347">
    <property type="entry name" value="Glyceraldehyde-3-phosphate dehydrogenase-like, C-terminal domain"/>
    <property type="match status" value="1"/>
</dbReference>
<dbReference type="SUPFAM" id="SSF51735">
    <property type="entry name" value="NAD(P)-binding Rossmann-fold domains"/>
    <property type="match status" value="1"/>
</dbReference>
<keyword id="KW-0520">NAD</keyword>
<keyword id="KW-0521">NADP</keyword>
<keyword id="KW-0560">Oxidoreductase</keyword>
<keyword id="KW-0662">Pyridine nucleotide biosynthesis</keyword>
<evidence type="ECO:0000255" key="1">
    <source>
        <dbReference type="HAMAP-Rule" id="MF_01265"/>
    </source>
</evidence>
<accession>A3M394</accession>
<organism>
    <name type="scientific">Acinetobacter baumannii (strain ATCC 17978 / DSM 105126 / CIP 53.77 / LMG 1025 / NCDC KC755 / 5377)</name>
    <dbReference type="NCBI Taxonomy" id="400667"/>
    <lineage>
        <taxon>Bacteria</taxon>
        <taxon>Pseudomonadati</taxon>
        <taxon>Pseudomonadota</taxon>
        <taxon>Gammaproteobacteria</taxon>
        <taxon>Moraxellales</taxon>
        <taxon>Moraxellaceae</taxon>
        <taxon>Acinetobacter</taxon>
        <taxon>Acinetobacter calcoaceticus/baumannii complex</taxon>
    </lineage>
</organism>
<gene>
    <name evidence="1" type="primary">nadX</name>
    <name type="ordered locus">A1S_0956</name>
</gene>
<comment type="function">
    <text evidence="1">Specifically catalyzes the NAD or NADP-dependent dehydrogenation of L-aspartate to iminoaspartate.</text>
</comment>
<comment type="catalytic activity">
    <reaction evidence="1">
        <text>L-aspartate + NADP(+) + H2O = oxaloacetate + NH4(+) + NADPH + H(+)</text>
        <dbReference type="Rhea" id="RHEA:11784"/>
        <dbReference type="ChEBI" id="CHEBI:15377"/>
        <dbReference type="ChEBI" id="CHEBI:15378"/>
        <dbReference type="ChEBI" id="CHEBI:16452"/>
        <dbReference type="ChEBI" id="CHEBI:28938"/>
        <dbReference type="ChEBI" id="CHEBI:29991"/>
        <dbReference type="ChEBI" id="CHEBI:57783"/>
        <dbReference type="ChEBI" id="CHEBI:58349"/>
        <dbReference type="EC" id="1.4.1.21"/>
    </reaction>
</comment>
<comment type="catalytic activity">
    <reaction evidence="1">
        <text>L-aspartate + NAD(+) + H2O = oxaloacetate + NH4(+) + NADH + H(+)</text>
        <dbReference type="Rhea" id="RHEA:11788"/>
        <dbReference type="ChEBI" id="CHEBI:15377"/>
        <dbReference type="ChEBI" id="CHEBI:15378"/>
        <dbReference type="ChEBI" id="CHEBI:16452"/>
        <dbReference type="ChEBI" id="CHEBI:28938"/>
        <dbReference type="ChEBI" id="CHEBI:29991"/>
        <dbReference type="ChEBI" id="CHEBI:57540"/>
        <dbReference type="ChEBI" id="CHEBI:57945"/>
        <dbReference type="EC" id="1.4.1.21"/>
    </reaction>
</comment>
<comment type="pathway">
    <text evidence="1">Cofactor biosynthesis; NAD(+) biosynthesis; iminoaspartate from L-aspartate (dehydrogenase route): step 1/1.</text>
</comment>
<comment type="miscellaneous">
    <text evidence="1">The iminoaspartate product is unstable in aqueous solution and can decompose to oxaloacetate and ammonia.</text>
</comment>
<comment type="similarity">
    <text evidence="1">Belongs to the L-aspartate dehydrogenase family.</text>
</comment>
<feature type="chain" id="PRO_1000140084" description="L-aspartate dehydrogenase">
    <location>
        <begin position="1"/>
        <end position="263"/>
    </location>
</feature>
<feature type="active site" evidence="1">
    <location>
        <position position="216"/>
    </location>
</feature>
<feature type="binding site" evidence="1">
    <location>
        <position position="120"/>
    </location>
    <ligand>
        <name>NAD(+)</name>
        <dbReference type="ChEBI" id="CHEBI:57540"/>
    </ligand>
</feature>
<feature type="binding site" evidence="1">
    <location>
        <position position="186"/>
    </location>
    <ligand>
        <name>NAD(+)</name>
        <dbReference type="ChEBI" id="CHEBI:57540"/>
    </ligand>
</feature>